<feature type="chain" id="PRO_0000215128" description="Glucokinase">
    <location>
        <begin position="1"/>
        <end position="336"/>
    </location>
</feature>
<feature type="binding site" evidence="1">
    <location>
        <begin position="12"/>
        <end position="17"/>
    </location>
    <ligand>
        <name>ATP</name>
        <dbReference type="ChEBI" id="CHEBI:30616"/>
    </ligand>
</feature>
<proteinExistence type="inferred from homology"/>
<accession>O25731</accession>
<reference key="1">
    <citation type="journal article" date="1997" name="Nature">
        <title>The complete genome sequence of the gastric pathogen Helicobacter pylori.</title>
        <authorList>
            <person name="Tomb J.-F."/>
            <person name="White O."/>
            <person name="Kerlavage A.R."/>
            <person name="Clayton R.A."/>
            <person name="Sutton G.G."/>
            <person name="Fleischmann R.D."/>
            <person name="Ketchum K.A."/>
            <person name="Klenk H.-P."/>
            <person name="Gill S.R."/>
            <person name="Dougherty B.A."/>
            <person name="Nelson K.E."/>
            <person name="Quackenbush J."/>
            <person name="Zhou L."/>
            <person name="Kirkness E.F."/>
            <person name="Peterson S.N."/>
            <person name="Loftus B.J."/>
            <person name="Richardson D.L."/>
            <person name="Dodson R.J."/>
            <person name="Khalak H.G."/>
            <person name="Glodek A."/>
            <person name="McKenney K."/>
            <person name="FitzGerald L.M."/>
            <person name="Lee N."/>
            <person name="Adams M.D."/>
            <person name="Hickey E.K."/>
            <person name="Berg D.E."/>
            <person name="Gocayne J.D."/>
            <person name="Utterback T.R."/>
            <person name="Peterson J.D."/>
            <person name="Kelley J.M."/>
            <person name="Cotton M.D."/>
            <person name="Weidman J.F."/>
            <person name="Fujii C."/>
            <person name="Bowman C."/>
            <person name="Watthey L."/>
            <person name="Wallin E."/>
            <person name="Hayes W.S."/>
            <person name="Borodovsky M."/>
            <person name="Karp P.D."/>
            <person name="Smith H.O."/>
            <person name="Fraser C.M."/>
            <person name="Venter J.C."/>
        </authorList>
    </citation>
    <scope>NUCLEOTIDE SEQUENCE [LARGE SCALE GENOMIC DNA]</scope>
    <source>
        <strain>ATCC 700392 / 26695</strain>
    </source>
</reference>
<protein>
    <recommendedName>
        <fullName evidence="1">Glucokinase</fullName>
        <ecNumber evidence="1">2.7.1.2</ecNumber>
    </recommendedName>
    <alternativeName>
        <fullName evidence="1">Glucose kinase</fullName>
    </alternativeName>
</protein>
<evidence type="ECO:0000255" key="1">
    <source>
        <dbReference type="HAMAP-Rule" id="MF_00524"/>
    </source>
</evidence>
<keyword id="KW-0067">ATP-binding</keyword>
<keyword id="KW-0963">Cytoplasm</keyword>
<keyword id="KW-0324">Glycolysis</keyword>
<keyword id="KW-0418">Kinase</keyword>
<keyword id="KW-0547">Nucleotide-binding</keyword>
<keyword id="KW-1185">Reference proteome</keyword>
<keyword id="KW-0808">Transferase</keyword>
<dbReference type="EC" id="2.7.1.2" evidence="1"/>
<dbReference type="EMBL" id="AE000511">
    <property type="protein sequence ID" value="AAD08146.1"/>
    <property type="molecule type" value="Genomic_DNA"/>
</dbReference>
<dbReference type="PIR" id="G64657">
    <property type="entry name" value="G64657"/>
</dbReference>
<dbReference type="RefSeq" id="NP_207894.1">
    <property type="nucleotide sequence ID" value="NC_000915.1"/>
</dbReference>
<dbReference type="RefSeq" id="WP_001126886.1">
    <property type="nucleotide sequence ID" value="NC_018939.1"/>
</dbReference>
<dbReference type="SMR" id="O25731"/>
<dbReference type="FunCoup" id="O25731">
    <property type="interactions" value="142"/>
</dbReference>
<dbReference type="STRING" id="85962.HP_1103"/>
<dbReference type="PaxDb" id="85962-C694_05690"/>
<dbReference type="EnsemblBacteria" id="AAD08146">
    <property type="protein sequence ID" value="AAD08146"/>
    <property type="gene ID" value="HP_1103"/>
</dbReference>
<dbReference type="KEGG" id="heo:C694_05690"/>
<dbReference type="KEGG" id="hpy:HP_1103"/>
<dbReference type="PATRIC" id="fig|85962.47.peg.1183"/>
<dbReference type="eggNOG" id="COG0837">
    <property type="taxonomic scope" value="Bacteria"/>
</dbReference>
<dbReference type="InParanoid" id="O25731"/>
<dbReference type="OrthoDB" id="257751at2"/>
<dbReference type="PhylomeDB" id="O25731"/>
<dbReference type="Proteomes" id="UP000000429">
    <property type="component" value="Chromosome"/>
</dbReference>
<dbReference type="GO" id="GO:0005829">
    <property type="term" value="C:cytosol"/>
    <property type="evidence" value="ECO:0000318"/>
    <property type="project" value="GO_Central"/>
</dbReference>
<dbReference type="GO" id="GO:0005524">
    <property type="term" value="F:ATP binding"/>
    <property type="evidence" value="ECO:0007669"/>
    <property type="project" value="UniProtKB-UniRule"/>
</dbReference>
<dbReference type="GO" id="GO:0005536">
    <property type="term" value="F:D-glucose binding"/>
    <property type="evidence" value="ECO:0007669"/>
    <property type="project" value="InterPro"/>
</dbReference>
<dbReference type="GO" id="GO:0004340">
    <property type="term" value="F:glucokinase activity"/>
    <property type="evidence" value="ECO:0000318"/>
    <property type="project" value="GO_Central"/>
</dbReference>
<dbReference type="GO" id="GO:0006096">
    <property type="term" value="P:glycolytic process"/>
    <property type="evidence" value="ECO:0007669"/>
    <property type="project" value="UniProtKB-UniRule"/>
</dbReference>
<dbReference type="CDD" id="cd24008">
    <property type="entry name" value="ASKHA_NBD_GLK"/>
    <property type="match status" value="1"/>
</dbReference>
<dbReference type="FunFam" id="3.40.367.20:FF:000002">
    <property type="entry name" value="Glucokinase"/>
    <property type="match status" value="1"/>
</dbReference>
<dbReference type="Gene3D" id="3.30.420.40">
    <property type="match status" value="1"/>
</dbReference>
<dbReference type="Gene3D" id="3.40.367.20">
    <property type="match status" value="1"/>
</dbReference>
<dbReference type="HAMAP" id="MF_00524">
    <property type="entry name" value="Glucokinase"/>
    <property type="match status" value="1"/>
</dbReference>
<dbReference type="InterPro" id="IPR043129">
    <property type="entry name" value="ATPase_NBD"/>
</dbReference>
<dbReference type="InterPro" id="IPR050201">
    <property type="entry name" value="Bacterial_glucokinase"/>
</dbReference>
<dbReference type="InterPro" id="IPR003836">
    <property type="entry name" value="Glucokinase"/>
</dbReference>
<dbReference type="NCBIfam" id="TIGR00749">
    <property type="entry name" value="glk"/>
    <property type="match status" value="1"/>
</dbReference>
<dbReference type="NCBIfam" id="NF001416">
    <property type="entry name" value="PRK00292.1-3"/>
    <property type="match status" value="1"/>
</dbReference>
<dbReference type="PANTHER" id="PTHR47690">
    <property type="entry name" value="GLUCOKINASE"/>
    <property type="match status" value="1"/>
</dbReference>
<dbReference type="PANTHER" id="PTHR47690:SF1">
    <property type="entry name" value="GLUCOKINASE"/>
    <property type="match status" value="1"/>
</dbReference>
<dbReference type="Pfam" id="PF02685">
    <property type="entry name" value="Glucokinase"/>
    <property type="match status" value="1"/>
</dbReference>
<dbReference type="SUPFAM" id="SSF53067">
    <property type="entry name" value="Actin-like ATPase domain"/>
    <property type="match status" value="1"/>
</dbReference>
<comment type="catalytic activity">
    <reaction evidence="1">
        <text>D-glucose + ATP = D-glucose 6-phosphate + ADP + H(+)</text>
        <dbReference type="Rhea" id="RHEA:17825"/>
        <dbReference type="ChEBI" id="CHEBI:4167"/>
        <dbReference type="ChEBI" id="CHEBI:15378"/>
        <dbReference type="ChEBI" id="CHEBI:30616"/>
        <dbReference type="ChEBI" id="CHEBI:61548"/>
        <dbReference type="ChEBI" id="CHEBI:456216"/>
        <dbReference type="EC" id="2.7.1.2"/>
    </reaction>
</comment>
<comment type="subcellular location">
    <subcellularLocation>
        <location evidence="1">Cytoplasm</location>
    </subcellularLocation>
</comment>
<comment type="similarity">
    <text evidence="1">Belongs to the bacterial glucokinase family.</text>
</comment>
<gene>
    <name evidence="1" type="primary">glk</name>
    <name type="ordered locus">HP_1103</name>
</gene>
<name>GLK_HELPY</name>
<sequence>MPKTETYPRLLADIGGTNARFGLEVAPRQIECIEVLRCEDFESLSDAVRFYLSKCKESLKLHPIYGSFAVATPIMGDFVQMTNNHWTFSIETTRQCLTLKKLLVINDFVAQAYAISAMQENDLAQIGGIKCEINAPKAILGPGTGLGVSTLIQNSDGSLKVLPGEGGHVSFAPFDDLEILVWQYARSKFNHVSAERFLSGSGLVLIYEALSKRKGLEKVAKLSKAELTPQIISECALNGDYPICRLTLDTFCSMLGTLAADVALTLGARGGVYLCGGIIPRFIDYFKTSPFRARFETKGRMGAFLASIPVHVVLKKTPGLDGAGIALENYLLHDKI</sequence>
<organism>
    <name type="scientific">Helicobacter pylori (strain ATCC 700392 / 26695)</name>
    <name type="common">Campylobacter pylori</name>
    <dbReference type="NCBI Taxonomy" id="85962"/>
    <lineage>
        <taxon>Bacteria</taxon>
        <taxon>Pseudomonadati</taxon>
        <taxon>Campylobacterota</taxon>
        <taxon>Epsilonproteobacteria</taxon>
        <taxon>Campylobacterales</taxon>
        <taxon>Helicobacteraceae</taxon>
        <taxon>Helicobacter</taxon>
    </lineage>
</organism>